<reference key="1">
    <citation type="journal article" date="2011" name="Proc. Natl. Acad. Sci. U.S.A.">
        <title>Genomic anatomy of Escherichia coli O157:H7 outbreaks.</title>
        <authorList>
            <person name="Eppinger M."/>
            <person name="Mammel M.K."/>
            <person name="Leclerc J.E."/>
            <person name="Ravel J."/>
            <person name="Cebula T.A."/>
        </authorList>
    </citation>
    <scope>NUCLEOTIDE SEQUENCE [LARGE SCALE GENOMIC DNA]</scope>
    <source>
        <strain>EC4115 / EHEC</strain>
    </source>
</reference>
<comment type="function">
    <text evidence="1">Specifically catalyzes the cleavage of the D-lactyl ether substituent of MurNAc 6-phosphate, producing GlcNAc 6-phosphate and D-lactate. Together with AnmK, is also required for the utilization of anhydro-N-acetylmuramic acid (anhMurNAc) either imported from the medium or derived from its own cell wall murein, and thus plays a role in cell wall recycling.</text>
</comment>
<comment type="catalytic activity">
    <reaction evidence="1">
        <text>N-acetyl-D-muramate 6-phosphate + H2O = N-acetyl-D-glucosamine 6-phosphate + (R)-lactate</text>
        <dbReference type="Rhea" id="RHEA:26410"/>
        <dbReference type="ChEBI" id="CHEBI:15377"/>
        <dbReference type="ChEBI" id="CHEBI:16004"/>
        <dbReference type="ChEBI" id="CHEBI:57513"/>
        <dbReference type="ChEBI" id="CHEBI:58722"/>
        <dbReference type="EC" id="4.2.1.126"/>
    </reaction>
</comment>
<comment type="pathway">
    <text evidence="1">Amino-sugar metabolism; 1,6-anhydro-N-acetylmuramate degradation.</text>
</comment>
<comment type="pathway">
    <text evidence="1">Amino-sugar metabolism; N-acetylmuramate degradation.</text>
</comment>
<comment type="pathway">
    <text evidence="1">Cell wall biogenesis; peptidoglycan recycling.</text>
</comment>
<comment type="subunit">
    <text evidence="1">Homodimer.</text>
</comment>
<comment type="induction">
    <text evidence="1">Induced by MurNAc 6-phosphate that releases the repressor MurR from the DNA. Repressed by MurR in the absence of MurNAc 6-phosphate.</text>
</comment>
<comment type="miscellaneous">
    <text evidence="1">A lyase-type mechanism (elimination/hydration) is suggested for the cleavage of the lactyl ether bond of MurNAc 6-phosphate, with the formation of an alpha,beta-unsaturated aldehyde intermediate with (E)-stereochemistry, followed by the syn addition of water to give product.</text>
</comment>
<comment type="similarity">
    <text evidence="1">Belongs to the GCKR-like family. MurNAc-6-P etherase subfamily.</text>
</comment>
<proteinExistence type="inferred from homology"/>
<sequence length="298" mass="31112">MQLEKMITEGSNAASAEIDRVSTLEMCRIINDEDKTVPLAVERVLPDIAAAIDVIHAQVSGGGRLIYLGAGTSGRLGILDASECPPTYGVKPGLVVGLIAGGEYAIQHAVEGAEDSREGGVNDLKNIGLTAQDVVVGIAASGRTPYVIAGLEYARQLGCRTVGISCNPGSAVSTTAEFAITPVVGAEVVTGSSRMKAGTAQKLVLNMLSTGLMIKSGKVFGNLMVDVVATNEKLHVRQVNIVKNATGCNAEQAEAALIACERNCKTAIVMVLKNLDAAEAKKRLDQHGGFIRQVLDKE</sequence>
<organism>
    <name type="scientific">Escherichia coli O157:H7 (strain EC4115 / EHEC)</name>
    <dbReference type="NCBI Taxonomy" id="444450"/>
    <lineage>
        <taxon>Bacteria</taxon>
        <taxon>Pseudomonadati</taxon>
        <taxon>Pseudomonadota</taxon>
        <taxon>Gammaproteobacteria</taxon>
        <taxon>Enterobacterales</taxon>
        <taxon>Enterobacteriaceae</taxon>
        <taxon>Escherichia</taxon>
    </lineage>
</organism>
<feature type="chain" id="PRO_1000092305" description="N-acetylmuramic acid 6-phosphate etherase">
    <location>
        <begin position="1"/>
        <end position="298"/>
    </location>
</feature>
<feature type="domain" description="SIS" evidence="1">
    <location>
        <begin position="55"/>
        <end position="218"/>
    </location>
</feature>
<feature type="active site" description="Proton donor" evidence="1">
    <location>
        <position position="83"/>
    </location>
</feature>
<feature type="active site" evidence="1">
    <location>
        <position position="114"/>
    </location>
</feature>
<gene>
    <name evidence="1" type="primary">murQ</name>
    <name type="ordered locus">ECH74115_3658</name>
</gene>
<protein>
    <recommendedName>
        <fullName evidence="1">N-acetylmuramic acid 6-phosphate etherase</fullName>
        <shortName evidence="1">MurNAc-6-P etherase</shortName>
        <ecNumber evidence="1">4.2.1.126</ecNumber>
    </recommendedName>
    <alternativeName>
        <fullName evidence="1">N-acetylmuramic acid 6-phosphate hydrolase</fullName>
    </alternativeName>
    <alternativeName>
        <fullName evidence="1">N-acetylmuramic acid 6-phosphate lyase</fullName>
    </alternativeName>
</protein>
<accession>B5YZX3</accession>
<keyword id="KW-0119">Carbohydrate metabolism</keyword>
<keyword id="KW-0456">Lyase</keyword>
<evidence type="ECO:0000255" key="1">
    <source>
        <dbReference type="HAMAP-Rule" id="MF_00068"/>
    </source>
</evidence>
<dbReference type="EC" id="4.2.1.126" evidence="1"/>
<dbReference type="EMBL" id="CP001164">
    <property type="protein sequence ID" value="ACI35924.1"/>
    <property type="molecule type" value="Genomic_DNA"/>
</dbReference>
<dbReference type="RefSeq" id="WP_001175615.1">
    <property type="nucleotide sequence ID" value="NC_011353.1"/>
</dbReference>
<dbReference type="SMR" id="B5YZX3"/>
<dbReference type="KEGG" id="ecf:ECH74115_3658"/>
<dbReference type="HOGENOM" id="CLU_049049_1_1_6"/>
<dbReference type="UniPathway" id="UPA00342"/>
<dbReference type="UniPathway" id="UPA00343"/>
<dbReference type="UniPathway" id="UPA00544"/>
<dbReference type="GO" id="GO:0097367">
    <property type="term" value="F:carbohydrate derivative binding"/>
    <property type="evidence" value="ECO:0007669"/>
    <property type="project" value="InterPro"/>
</dbReference>
<dbReference type="GO" id="GO:0016835">
    <property type="term" value="F:carbon-oxygen lyase activity"/>
    <property type="evidence" value="ECO:0007669"/>
    <property type="project" value="UniProtKB-UniRule"/>
</dbReference>
<dbReference type="GO" id="GO:0016803">
    <property type="term" value="F:ether hydrolase activity"/>
    <property type="evidence" value="ECO:0007669"/>
    <property type="project" value="TreeGrafter"/>
</dbReference>
<dbReference type="GO" id="GO:0097175">
    <property type="term" value="P:1,6-anhydro-N-acetyl-beta-muramic acid catabolic process"/>
    <property type="evidence" value="ECO:0007669"/>
    <property type="project" value="UniProtKB-UniRule"/>
</dbReference>
<dbReference type="GO" id="GO:0046348">
    <property type="term" value="P:amino sugar catabolic process"/>
    <property type="evidence" value="ECO:0007669"/>
    <property type="project" value="InterPro"/>
</dbReference>
<dbReference type="GO" id="GO:0097173">
    <property type="term" value="P:N-acetylmuramic acid catabolic process"/>
    <property type="evidence" value="ECO:0007669"/>
    <property type="project" value="UniProtKB-UniPathway"/>
</dbReference>
<dbReference type="GO" id="GO:0009254">
    <property type="term" value="P:peptidoglycan turnover"/>
    <property type="evidence" value="ECO:0007669"/>
    <property type="project" value="UniProtKB-UniRule"/>
</dbReference>
<dbReference type="CDD" id="cd05007">
    <property type="entry name" value="SIS_Etherase"/>
    <property type="match status" value="1"/>
</dbReference>
<dbReference type="FunFam" id="1.10.8.1080:FF:000001">
    <property type="entry name" value="N-acetylmuramic acid 6-phosphate etherase"/>
    <property type="match status" value="1"/>
</dbReference>
<dbReference type="FunFam" id="3.40.50.10490:FF:000014">
    <property type="entry name" value="N-acetylmuramic acid 6-phosphate etherase"/>
    <property type="match status" value="1"/>
</dbReference>
<dbReference type="Gene3D" id="1.10.8.1080">
    <property type="match status" value="1"/>
</dbReference>
<dbReference type="Gene3D" id="3.40.50.10490">
    <property type="entry name" value="Glucose-6-phosphate isomerase like protein, domain 1"/>
    <property type="match status" value="1"/>
</dbReference>
<dbReference type="HAMAP" id="MF_00068">
    <property type="entry name" value="MurQ"/>
    <property type="match status" value="1"/>
</dbReference>
<dbReference type="InterPro" id="IPR005488">
    <property type="entry name" value="Etherase_MurQ"/>
</dbReference>
<dbReference type="InterPro" id="IPR005486">
    <property type="entry name" value="Glucokinase_regulatory_CS"/>
</dbReference>
<dbReference type="InterPro" id="IPR040190">
    <property type="entry name" value="MURQ/GCKR"/>
</dbReference>
<dbReference type="InterPro" id="IPR001347">
    <property type="entry name" value="SIS_dom"/>
</dbReference>
<dbReference type="InterPro" id="IPR046348">
    <property type="entry name" value="SIS_dom_sf"/>
</dbReference>
<dbReference type="NCBIfam" id="TIGR00274">
    <property type="entry name" value="N-acetylmuramic acid 6-phosphate etherase"/>
    <property type="match status" value="1"/>
</dbReference>
<dbReference type="NCBIfam" id="NF003915">
    <property type="entry name" value="PRK05441.1"/>
    <property type="match status" value="1"/>
</dbReference>
<dbReference type="NCBIfam" id="NF009222">
    <property type="entry name" value="PRK12570.1"/>
    <property type="match status" value="1"/>
</dbReference>
<dbReference type="PANTHER" id="PTHR10088">
    <property type="entry name" value="GLUCOKINASE REGULATORY PROTEIN"/>
    <property type="match status" value="1"/>
</dbReference>
<dbReference type="PANTHER" id="PTHR10088:SF4">
    <property type="entry name" value="GLUCOKINASE REGULATORY PROTEIN"/>
    <property type="match status" value="1"/>
</dbReference>
<dbReference type="Pfam" id="PF22645">
    <property type="entry name" value="GKRP_SIS_N"/>
    <property type="match status" value="1"/>
</dbReference>
<dbReference type="SUPFAM" id="SSF53697">
    <property type="entry name" value="SIS domain"/>
    <property type="match status" value="1"/>
</dbReference>
<dbReference type="PROSITE" id="PS01272">
    <property type="entry name" value="GCKR"/>
    <property type="match status" value="1"/>
</dbReference>
<dbReference type="PROSITE" id="PS51464">
    <property type="entry name" value="SIS"/>
    <property type="match status" value="1"/>
</dbReference>
<name>MURQ_ECO5E</name>